<reference key="1">
    <citation type="journal article" date="2003" name="Proc. Natl. Acad. Sci. U.S.A.">
        <title>The complete genome sequence of the carcinogenic bacterium Helicobacter hepaticus.</title>
        <authorList>
            <person name="Suerbaum S."/>
            <person name="Josenhans C."/>
            <person name="Sterzenbach T."/>
            <person name="Drescher B."/>
            <person name="Brandt P."/>
            <person name="Bell M."/>
            <person name="Droege M."/>
            <person name="Fartmann B."/>
            <person name="Fischer H.-P."/>
            <person name="Ge Z."/>
            <person name="Hoerster A."/>
            <person name="Holland R."/>
            <person name="Klein K."/>
            <person name="Koenig J."/>
            <person name="Macko L."/>
            <person name="Mendz G.L."/>
            <person name="Nyakatura G."/>
            <person name="Schauer D.B."/>
            <person name="Shen Z."/>
            <person name="Weber J."/>
            <person name="Frosch M."/>
            <person name="Fox J.G."/>
        </authorList>
    </citation>
    <scope>NUCLEOTIDE SEQUENCE [LARGE SCALE GENOMIC DNA]</scope>
    <source>
        <strain>ATCC 51449 / 3B1</strain>
    </source>
</reference>
<name>METN_HELHP</name>
<feature type="chain" id="PRO_0000270309" description="Methionine import ATP-binding protein MetN">
    <location>
        <begin position="1"/>
        <end position="351"/>
    </location>
</feature>
<feature type="domain" description="ABC transporter" evidence="1">
    <location>
        <begin position="2"/>
        <end position="238"/>
    </location>
</feature>
<feature type="binding site" evidence="1">
    <location>
        <begin position="35"/>
        <end position="42"/>
    </location>
    <ligand>
        <name>ATP</name>
        <dbReference type="ChEBI" id="CHEBI:30616"/>
    </ligand>
</feature>
<organism>
    <name type="scientific">Helicobacter hepaticus (strain ATCC 51449 / 3B1)</name>
    <dbReference type="NCBI Taxonomy" id="235279"/>
    <lineage>
        <taxon>Bacteria</taxon>
        <taxon>Pseudomonadati</taxon>
        <taxon>Campylobacterota</taxon>
        <taxon>Epsilonproteobacteria</taxon>
        <taxon>Campylobacterales</taxon>
        <taxon>Helicobacteraceae</taxon>
        <taxon>Helicobacter</taxon>
    </lineage>
</organism>
<proteinExistence type="inferred from homology"/>
<dbReference type="EC" id="7.4.2.11" evidence="1"/>
<dbReference type="EMBL" id="AE017125">
    <property type="protein sequence ID" value="AAP77313.1"/>
    <property type="molecule type" value="Genomic_DNA"/>
</dbReference>
<dbReference type="RefSeq" id="WP_011115558.1">
    <property type="nucleotide sequence ID" value="NC_004917.1"/>
</dbReference>
<dbReference type="SMR" id="Q7VI92"/>
<dbReference type="STRING" id="235279.HH_0716"/>
<dbReference type="KEGG" id="hhe:HH_0716"/>
<dbReference type="eggNOG" id="COG1135">
    <property type="taxonomic scope" value="Bacteria"/>
</dbReference>
<dbReference type="HOGENOM" id="CLU_000604_1_3_7"/>
<dbReference type="OrthoDB" id="9814623at2"/>
<dbReference type="Proteomes" id="UP000002495">
    <property type="component" value="Chromosome"/>
</dbReference>
<dbReference type="GO" id="GO:0005886">
    <property type="term" value="C:plasma membrane"/>
    <property type="evidence" value="ECO:0007669"/>
    <property type="project" value="UniProtKB-SubCell"/>
</dbReference>
<dbReference type="GO" id="GO:0033232">
    <property type="term" value="F:ABC-type D-methionine transporter activity"/>
    <property type="evidence" value="ECO:0007669"/>
    <property type="project" value="UniProtKB-EC"/>
</dbReference>
<dbReference type="GO" id="GO:0005524">
    <property type="term" value="F:ATP binding"/>
    <property type="evidence" value="ECO:0007669"/>
    <property type="project" value="UniProtKB-KW"/>
</dbReference>
<dbReference type="GO" id="GO:0016887">
    <property type="term" value="F:ATP hydrolysis activity"/>
    <property type="evidence" value="ECO:0007669"/>
    <property type="project" value="InterPro"/>
</dbReference>
<dbReference type="CDD" id="cd03258">
    <property type="entry name" value="ABC_MetN_methionine_transporter"/>
    <property type="match status" value="1"/>
</dbReference>
<dbReference type="FunFam" id="3.40.50.300:FF:000056">
    <property type="entry name" value="Cell division ATP-binding protein FtsE"/>
    <property type="match status" value="1"/>
</dbReference>
<dbReference type="Gene3D" id="3.30.70.260">
    <property type="match status" value="1"/>
</dbReference>
<dbReference type="Gene3D" id="3.40.50.300">
    <property type="entry name" value="P-loop containing nucleotide triphosphate hydrolases"/>
    <property type="match status" value="1"/>
</dbReference>
<dbReference type="InterPro" id="IPR003593">
    <property type="entry name" value="AAA+_ATPase"/>
</dbReference>
<dbReference type="InterPro" id="IPR003439">
    <property type="entry name" value="ABC_transporter-like_ATP-bd"/>
</dbReference>
<dbReference type="InterPro" id="IPR017871">
    <property type="entry name" value="ABC_transporter-like_CS"/>
</dbReference>
<dbReference type="InterPro" id="IPR045865">
    <property type="entry name" value="ACT-like_dom_sf"/>
</dbReference>
<dbReference type="InterPro" id="IPR041701">
    <property type="entry name" value="MetN_ABC"/>
</dbReference>
<dbReference type="InterPro" id="IPR050086">
    <property type="entry name" value="MetN_ABC_transporter-like"/>
</dbReference>
<dbReference type="InterPro" id="IPR018449">
    <property type="entry name" value="NIL_domain"/>
</dbReference>
<dbReference type="InterPro" id="IPR027417">
    <property type="entry name" value="P-loop_NTPase"/>
</dbReference>
<dbReference type="PANTHER" id="PTHR43166">
    <property type="entry name" value="AMINO ACID IMPORT ATP-BINDING PROTEIN"/>
    <property type="match status" value="1"/>
</dbReference>
<dbReference type="PANTHER" id="PTHR43166:SF30">
    <property type="entry name" value="METHIONINE IMPORT ATP-BINDING PROTEIN METN"/>
    <property type="match status" value="1"/>
</dbReference>
<dbReference type="Pfam" id="PF00005">
    <property type="entry name" value="ABC_tran"/>
    <property type="match status" value="1"/>
</dbReference>
<dbReference type="Pfam" id="PF09383">
    <property type="entry name" value="NIL"/>
    <property type="match status" value="1"/>
</dbReference>
<dbReference type="SMART" id="SM00382">
    <property type="entry name" value="AAA"/>
    <property type="match status" value="1"/>
</dbReference>
<dbReference type="SMART" id="SM00930">
    <property type="entry name" value="NIL"/>
    <property type="match status" value="1"/>
</dbReference>
<dbReference type="SUPFAM" id="SSF55021">
    <property type="entry name" value="ACT-like"/>
    <property type="match status" value="1"/>
</dbReference>
<dbReference type="SUPFAM" id="SSF52540">
    <property type="entry name" value="P-loop containing nucleoside triphosphate hydrolases"/>
    <property type="match status" value="1"/>
</dbReference>
<dbReference type="PROSITE" id="PS00211">
    <property type="entry name" value="ABC_TRANSPORTER_1"/>
    <property type="match status" value="1"/>
</dbReference>
<dbReference type="PROSITE" id="PS50893">
    <property type="entry name" value="ABC_TRANSPORTER_2"/>
    <property type="match status" value="1"/>
</dbReference>
<dbReference type="PROSITE" id="PS51264">
    <property type="entry name" value="METN"/>
    <property type="match status" value="1"/>
</dbReference>
<protein>
    <recommendedName>
        <fullName evidence="1">Methionine import ATP-binding protein MetN</fullName>
        <ecNumber evidence="1">7.4.2.11</ecNumber>
    </recommendedName>
</protein>
<evidence type="ECO:0000255" key="1">
    <source>
        <dbReference type="HAMAP-Rule" id="MF_01719"/>
    </source>
</evidence>
<accession>Q7VI92</accession>
<comment type="function">
    <text evidence="1">Part of the ABC transporter complex MetNIQ involved in methionine import. Responsible for energy coupling to the transport system.</text>
</comment>
<comment type="catalytic activity">
    <reaction evidence="1">
        <text>L-methionine(out) + ATP + H2O = L-methionine(in) + ADP + phosphate + H(+)</text>
        <dbReference type="Rhea" id="RHEA:29779"/>
        <dbReference type="ChEBI" id="CHEBI:15377"/>
        <dbReference type="ChEBI" id="CHEBI:15378"/>
        <dbReference type="ChEBI" id="CHEBI:30616"/>
        <dbReference type="ChEBI" id="CHEBI:43474"/>
        <dbReference type="ChEBI" id="CHEBI:57844"/>
        <dbReference type="ChEBI" id="CHEBI:456216"/>
        <dbReference type="EC" id="7.4.2.11"/>
    </reaction>
</comment>
<comment type="catalytic activity">
    <reaction evidence="1">
        <text>D-methionine(out) + ATP + H2O = D-methionine(in) + ADP + phosphate + H(+)</text>
        <dbReference type="Rhea" id="RHEA:29767"/>
        <dbReference type="ChEBI" id="CHEBI:15377"/>
        <dbReference type="ChEBI" id="CHEBI:15378"/>
        <dbReference type="ChEBI" id="CHEBI:30616"/>
        <dbReference type="ChEBI" id="CHEBI:43474"/>
        <dbReference type="ChEBI" id="CHEBI:57932"/>
        <dbReference type="ChEBI" id="CHEBI:456216"/>
        <dbReference type="EC" id="7.4.2.11"/>
    </reaction>
</comment>
<comment type="subunit">
    <text evidence="1">The complex is composed of two ATP-binding proteins (MetN), two transmembrane proteins (MetI) and a solute-binding protein (MetQ).</text>
</comment>
<comment type="subcellular location">
    <subcellularLocation>
        <location evidence="1">Cell inner membrane</location>
        <topology evidence="1">Peripheral membrane protein</topology>
    </subcellularLocation>
</comment>
<comment type="similarity">
    <text evidence="1">Belongs to the ABC transporter superfamily. Methionine importer (TC 3.A.1.24) family.</text>
</comment>
<sequence length="351" mass="38994">MIKLNHINKTYPNGFVALKNIDLEVAKGDIMGIIGYSGAGKSTLIRIINRLEEPTSGTLFVDGVNMLGLKQKELQMQRQKIGMIFQHFNLLSARNVFDNVAFALEIAKWDKKAIKPRVDELLELVGLSERASFFPSQLSGGQKQRVAIARALANHPKVLLCDEATSALDTKTTKSILALLRDIQRRLGLSVVLITHQIEVVREICNKMCVVSDGAIVERGSVAEVFAAPKHPITRELISFLPQDEGHIISHLKDLHNVYKVIFTGPYAHLPLVSQMIREFDVDVNILSGNIDELATGEVGHLVLKFIATDDKRDKALSWLKEQGVSIEDLNLMCQNTDSIQLSQKIESKAV</sequence>
<keyword id="KW-0029">Amino-acid transport</keyword>
<keyword id="KW-0067">ATP-binding</keyword>
<keyword id="KW-0997">Cell inner membrane</keyword>
<keyword id="KW-1003">Cell membrane</keyword>
<keyword id="KW-0472">Membrane</keyword>
<keyword id="KW-0547">Nucleotide-binding</keyword>
<keyword id="KW-1185">Reference proteome</keyword>
<keyword id="KW-1278">Translocase</keyword>
<keyword id="KW-0813">Transport</keyword>
<gene>
    <name evidence="1" type="primary">metN</name>
    <name type="ordered locus">HH_0716</name>
</gene>